<sequence length="598" mass="66601">MSFMRGGSECSTGRNPLSQFTKHTAEDRSLQHDRVAGPSGGRVGGMRSNTGEMSQQDREMMARFGAAGPEQSSFNYEQMRHELHNMGAQGGQIPQVPSQQGAANGGQWARDFGGQQTAPGAAPQDAKNWNAEFQRGGSPAEAMQQQGPGPMQGGMGMGGMPMYGMARPMYSGMSANMAPQFQPQQANARVVELDEQNWEEQFKQMDSAVGKGKEVEEQTAETATATETVTETETTTEDKPMDIKNMDFENIWKNLQVNVLDNMDEWLEETNSPAWERDFHEYTHNRPEFADYQFEENNQFMEHPDPFKIGVELMETGGRLSEAALAFEAAVQKNTEHAEAWGRLGACQAQNEKEDPAIRALERCIKLEPGNLSALMNLSVSYTNEGYENAAYATLERWLATKYPEVVDQARNQEPRLGNEDKFQLHSRVTELFIRAAQLSPDGANIDADVQVGLGVLFYGNEEYDKAIDCFNAAIAVRPDDALLWNRLGATLANSHRSEEAIDAYYKALELRPSFVRARYNLGVSCINIGCYKEAAQYLLGALSMHKVEGVQDDVLANQSTNLYDTLKRVFLGMDRRDLVAKVGNGMDVNQFRNEFEF</sequence>
<name>PEX5_YARLI</name>
<keyword id="KW-0963">Cytoplasm</keyword>
<keyword id="KW-1017">Isopeptide bond</keyword>
<keyword id="KW-0472">Membrane</keyword>
<keyword id="KW-0576">Peroxisome</keyword>
<keyword id="KW-0653">Protein transport</keyword>
<keyword id="KW-1185">Reference proteome</keyword>
<keyword id="KW-0677">Repeat</keyword>
<keyword id="KW-0882">Thioester bond</keyword>
<keyword id="KW-0802">TPR repeat</keyword>
<keyword id="KW-0813">Transport</keyword>
<keyword id="KW-0832">Ubl conjugation</keyword>
<organism>
    <name type="scientific">Yarrowia lipolytica (strain CLIB 122 / E 150)</name>
    <name type="common">Yeast</name>
    <name type="synonym">Candida lipolytica</name>
    <dbReference type="NCBI Taxonomy" id="284591"/>
    <lineage>
        <taxon>Eukaryota</taxon>
        <taxon>Fungi</taxon>
        <taxon>Dikarya</taxon>
        <taxon>Ascomycota</taxon>
        <taxon>Saccharomycotina</taxon>
        <taxon>Dipodascomycetes</taxon>
        <taxon>Dipodascales</taxon>
        <taxon>Dipodascales incertae sedis</taxon>
        <taxon>Yarrowia</taxon>
    </lineage>
</organism>
<accession>Q99144</accession>
<feature type="chain" id="PRO_0000106315" description="Peroxisomal targeting signal receptor">
    <location>
        <begin position="1"/>
        <end position="598"/>
    </location>
</feature>
<feature type="repeat" description="TPR 1">
    <location>
        <begin position="304"/>
        <end position="337"/>
    </location>
</feature>
<feature type="repeat" description="TPR 2">
    <location>
        <begin position="338"/>
        <end position="371"/>
    </location>
</feature>
<feature type="repeat" description="TPR 3">
    <location>
        <begin position="372"/>
        <end position="409"/>
    </location>
</feature>
<feature type="repeat" description="TPR 4">
    <location>
        <begin position="410"/>
        <end position="447"/>
    </location>
</feature>
<feature type="repeat" description="TPR 5">
    <location>
        <begin position="448"/>
        <end position="481"/>
    </location>
</feature>
<feature type="repeat" description="TPR 6">
    <location>
        <begin position="482"/>
        <end position="515"/>
    </location>
</feature>
<feature type="repeat" description="TPR 7">
    <location>
        <begin position="516"/>
        <end position="549"/>
    </location>
</feature>
<feature type="region of interest" description="Disordered" evidence="2">
    <location>
        <begin position="1"/>
        <end position="54"/>
    </location>
</feature>
<feature type="region of interest" description="Disordered" evidence="2">
    <location>
        <begin position="135"/>
        <end position="154"/>
    </location>
</feature>
<feature type="region of interest" description="Disordered" evidence="2">
    <location>
        <begin position="208"/>
        <end position="237"/>
    </location>
</feature>
<feature type="compositionally biased region" description="Polar residues" evidence="2">
    <location>
        <begin position="9"/>
        <end position="22"/>
    </location>
</feature>
<feature type="compositionally biased region" description="Basic and acidic residues" evidence="2">
    <location>
        <begin position="23"/>
        <end position="35"/>
    </location>
</feature>
<feature type="compositionally biased region" description="Low complexity" evidence="2">
    <location>
        <begin position="220"/>
        <end position="233"/>
    </location>
</feature>
<feature type="cross-link" description="Glycyl cysteine thioester (Cys-Gly) (interchain with G-Cter in ubiquitin)" evidence="1">
    <location>
        <position position="10"/>
    </location>
</feature>
<feature type="cross-link" description="Glycyl lysine isopeptide (Lys-Gly) (interchain with G-Cter in ubiquitin)" evidence="1">
    <location>
        <position position="22"/>
    </location>
</feature>
<reference key="1">
    <citation type="journal article" date="1995" name="J. Cell Biol.">
        <title>Pay32p of the yeast Yarrowia lipolytica is an intraperoxisomal component of the matrix protein translocation machinery.</title>
        <authorList>
            <person name="Szilard R.K."/>
            <person name="Titorenko V.I."/>
            <person name="Veenhuis M."/>
            <person name="Rachubinski R.A."/>
        </authorList>
    </citation>
    <scope>NUCLEOTIDE SEQUENCE [GENOMIC DNA]</scope>
    <source>
        <strain>E 122</strain>
    </source>
</reference>
<reference key="2">
    <citation type="journal article" date="2004" name="Nature">
        <title>Genome evolution in yeasts.</title>
        <authorList>
            <person name="Dujon B."/>
            <person name="Sherman D."/>
            <person name="Fischer G."/>
            <person name="Durrens P."/>
            <person name="Casaregola S."/>
            <person name="Lafontaine I."/>
            <person name="de Montigny J."/>
            <person name="Marck C."/>
            <person name="Neuveglise C."/>
            <person name="Talla E."/>
            <person name="Goffard N."/>
            <person name="Frangeul L."/>
            <person name="Aigle M."/>
            <person name="Anthouard V."/>
            <person name="Babour A."/>
            <person name="Barbe V."/>
            <person name="Barnay S."/>
            <person name="Blanchin S."/>
            <person name="Beckerich J.-M."/>
            <person name="Beyne E."/>
            <person name="Bleykasten C."/>
            <person name="Boisrame A."/>
            <person name="Boyer J."/>
            <person name="Cattolico L."/>
            <person name="Confanioleri F."/>
            <person name="de Daruvar A."/>
            <person name="Despons L."/>
            <person name="Fabre E."/>
            <person name="Fairhead C."/>
            <person name="Ferry-Dumazet H."/>
            <person name="Groppi A."/>
            <person name="Hantraye F."/>
            <person name="Hennequin C."/>
            <person name="Jauniaux N."/>
            <person name="Joyet P."/>
            <person name="Kachouri R."/>
            <person name="Kerrest A."/>
            <person name="Koszul R."/>
            <person name="Lemaire M."/>
            <person name="Lesur I."/>
            <person name="Ma L."/>
            <person name="Muller H."/>
            <person name="Nicaud J.-M."/>
            <person name="Nikolski M."/>
            <person name="Oztas S."/>
            <person name="Ozier-Kalogeropoulos O."/>
            <person name="Pellenz S."/>
            <person name="Potier S."/>
            <person name="Richard G.-F."/>
            <person name="Straub M.-L."/>
            <person name="Suleau A."/>
            <person name="Swennen D."/>
            <person name="Tekaia F."/>
            <person name="Wesolowski-Louvel M."/>
            <person name="Westhof E."/>
            <person name="Wirth B."/>
            <person name="Zeniou-Meyer M."/>
            <person name="Zivanovic Y."/>
            <person name="Bolotin-Fukuhara M."/>
            <person name="Thierry A."/>
            <person name="Bouchier C."/>
            <person name="Caudron B."/>
            <person name="Scarpelli C."/>
            <person name="Gaillardin C."/>
            <person name="Weissenbach J."/>
            <person name="Wincker P."/>
            <person name="Souciet J.-L."/>
        </authorList>
    </citation>
    <scope>NUCLEOTIDE SEQUENCE [LARGE SCALE GENOMIC DNA]</scope>
    <source>
        <strain>CLIB 122 / E 150</strain>
    </source>
</reference>
<gene>
    <name type="primary">PAY32</name>
    <name type="synonym">PEX5</name>
    <name type="ordered locus">YALI0F28457g</name>
</gene>
<proteinExistence type="inferred from homology"/>
<evidence type="ECO:0000250" key="1"/>
<evidence type="ECO:0000256" key="2">
    <source>
        <dbReference type="SAM" id="MobiDB-lite"/>
    </source>
</evidence>
<evidence type="ECO:0000305" key="3"/>
<comment type="function">
    <text>Binds to the C-terminal PTS1-type tripeptide peroxisomal targeting signal (SKL-type) and plays an essential role in peroxisomal protein import.</text>
</comment>
<comment type="subcellular location">
    <subcellularLocation>
        <location>Cytoplasm</location>
    </subcellularLocation>
    <subcellularLocation>
        <location>Peroxisome membrane</location>
        <topology>Peripheral membrane protein</topology>
    </subcellularLocation>
    <text>Its distribution appears to be dynamic. It is probably a cycling receptor found mainly in the cytoplasm and as well associated to the peroxisomal membrane through a docking factor (PEX13).</text>
</comment>
<comment type="PTM">
    <text evidence="1">Ubiquitination at Cys-10 is UBC4-independent but requires the presence of PEX4. Ubiquitination at Lys-22 is UBC4-dependent (By similarity).</text>
</comment>
<comment type="similarity">
    <text evidence="3">Belongs to the peroxisomal targeting signal receptor family.</text>
</comment>
<dbReference type="EMBL" id="U28155">
    <property type="protein sequence ID" value="AAA85166.1"/>
    <property type="molecule type" value="Genomic_DNA"/>
</dbReference>
<dbReference type="EMBL" id="CR382132">
    <property type="protein sequence ID" value="CAG78803.1"/>
    <property type="molecule type" value="Genomic_DNA"/>
</dbReference>
<dbReference type="RefSeq" id="XP_505991.1">
    <property type="nucleotide sequence ID" value="XM_505991.1"/>
</dbReference>
<dbReference type="SMR" id="Q99144"/>
<dbReference type="FunCoup" id="Q99144">
    <property type="interactions" value="94"/>
</dbReference>
<dbReference type="STRING" id="284591.Q99144"/>
<dbReference type="EnsemblFungi" id="CAG78803">
    <property type="protein sequence ID" value="CAG78803"/>
    <property type="gene ID" value="YALI0_F28457g"/>
</dbReference>
<dbReference type="KEGG" id="yli:2908530"/>
<dbReference type="VEuPathDB" id="FungiDB:YALI0_F28457g"/>
<dbReference type="HOGENOM" id="CLU_013516_3_0_1"/>
<dbReference type="InParanoid" id="Q99144"/>
<dbReference type="OMA" id="WEEQFKQ"/>
<dbReference type="OrthoDB" id="72351at4891"/>
<dbReference type="Proteomes" id="UP000001300">
    <property type="component" value="Chromosome F"/>
</dbReference>
<dbReference type="GO" id="GO:0005829">
    <property type="term" value="C:cytosol"/>
    <property type="evidence" value="ECO:0000318"/>
    <property type="project" value="GO_Central"/>
</dbReference>
<dbReference type="GO" id="GO:0005778">
    <property type="term" value="C:peroxisomal membrane"/>
    <property type="evidence" value="ECO:0000318"/>
    <property type="project" value="GO_Central"/>
</dbReference>
<dbReference type="GO" id="GO:0005052">
    <property type="term" value="F:peroxisome matrix targeting signal-1 binding"/>
    <property type="evidence" value="ECO:0000318"/>
    <property type="project" value="GO_Central"/>
</dbReference>
<dbReference type="GO" id="GO:0016560">
    <property type="term" value="P:protein import into peroxisome matrix, docking"/>
    <property type="evidence" value="ECO:0000318"/>
    <property type="project" value="GO_Central"/>
</dbReference>
<dbReference type="FunFam" id="1.25.40.10:FF:000218">
    <property type="entry name" value="Peroxisomal targeting signal receptor"/>
    <property type="match status" value="1"/>
</dbReference>
<dbReference type="Gene3D" id="1.25.40.10">
    <property type="entry name" value="Tetratricopeptide repeat domain"/>
    <property type="match status" value="1"/>
</dbReference>
<dbReference type="InterPro" id="IPR024111">
    <property type="entry name" value="PEX5/PEX5L"/>
</dbReference>
<dbReference type="InterPro" id="IPR011990">
    <property type="entry name" value="TPR-like_helical_dom_sf"/>
</dbReference>
<dbReference type="InterPro" id="IPR019734">
    <property type="entry name" value="TPR_rpt"/>
</dbReference>
<dbReference type="PANTHER" id="PTHR10130:SF0">
    <property type="entry name" value="GH08708P"/>
    <property type="match status" value="1"/>
</dbReference>
<dbReference type="PANTHER" id="PTHR10130">
    <property type="entry name" value="PEROXISOMAL TARGETING SIGNAL 1 RECEPTOR PEX5"/>
    <property type="match status" value="1"/>
</dbReference>
<dbReference type="Pfam" id="PF13432">
    <property type="entry name" value="TPR_16"/>
    <property type="match status" value="2"/>
</dbReference>
<dbReference type="SMART" id="SM00028">
    <property type="entry name" value="TPR"/>
    <property type="match status" value="4"/>
</dbReference>
<dbReference type="SUPFAM" id="SSF48452">
    <property type="entry name" value="TPR-like"/>
    <property type="match status" value="1"/>
</dbReference>
<dbReference type="PROSITE" id="PS50005">
    <property type="entry name" value="TPR"/>
    <property type="match status" value="4"/>
</dbReference>
<dbReference type="PROSITE" id="PS50293">
    <property type="entry name" value="TPR_REGION"/>
    <property type="match status" value="1"/>
</dbReference>
<protein>
    <recommendedName>
        <fullName>Peroxisomal targeting signal receptor</fullName>
        <shortName>PTS1 receptor</shortName>
        <shortName>PTS1R</shortName>
    </recommendedName>
    <alternativeName>
        <fullName>Peroxin-5</fullName>
    </alternativeName>
    <alternativeName>
        <fullName>Peroxisomal protein PAY32</fullName>
    </alternativeName>
</protein>